<comment type="function">
    <text evidence="1">Catalyzes the decarboxylation of four acetate groups of uroporphyrinogen-III to yield coproporphyrinogen-III.</text>
</comment>
<comment type="catalytic activity">
    <reaction evidence="1">
        <text>uroporphyrinogen III + 4 H(+) = coproporphyrinogen III + 4 CO2</text>
        <dbReference type="Rhea" id="RHEA:19865"/>
        <dbReference type="ChEBI" id="CHEBI:15378"/>
        <dbReference type="ChEBI" id="CHEBI:16526"/>
        <dbReference type="ChEBI" id="CHEBI:57308"/>
        <dbReference type="ChEBI" id="CHEBI:57309"/>
        <dbReference type="EC" id="4.1.1.37"/>
    </reaction>
</comment>
<comment type="pathway">
    <text evidence="1">Porphyrin-containing compound metabolism; protoporphyrin-IX biosynthesis; coproporphyrinogen-III from 5-aminolevulinate: step 4/4.</text>
</comment>
<comment type="subunit">
    <text evidence="1">Homodimer.</text>
</comment>
<comment type="subcellular location">
    <subcellularLocation>
        <location evidence="1">Cytoplasm</location>
    </subcellularLocation>
</comment>
<comment type="similarity">
    <text evidence="1">Belongs to the uroporphyrinogen decarboxylase family.</text>
</comment>
<name>DCUP_PSEP7</name>
<gene>
    <name evidence="1" type="primary">hemE</name>
    <name type="ordered locus">PSPA7_5771</name>
</gene>
<evidence type="ECO:0000255" key="1">
    <source>
        <dbReference type="HAMAP-Rule" id="MF_00218"/>
    </source>
</evidence>
<keyword id="KW-0963">Cytoplasm</keyword>
<keyword id="KW-0210">Decarboxylase</keyword>
<keyword id="KW-0456">Lyase</keyword>
<keyword id="KW-0627">Porphyrin biosynthesis</keyword>
<protein>
    <recommendedName>
        <fullName evidence="1">Uroporphyrinogen decarboxylase</fullName>
        <shortName evidence="1">UPD</shortName>
        <shortName evidence="1">URO-D</shortName>
        <ecNumber evidence="1">4.1.1.37</ecNumber>
    </recommendedName>
</protein>
<dbReference type="EC" id="4.1.1.37" evidence="1"/>
<dbReference type="EMBL" id="CP000744">
    <property type="protein sequence ID" value="ABR84242.1"/>
    <property type="molecule type" value="Genomic_DNA"/>
</dbReference>
<dbReference type="RefSeq" id="WP_012077715.1">
    <property type="nucleotide sequence ID" value="NC_009656.1"/>
</dbReference>
<dbReference type="SMR" id="A6VDF5"/>
<dbReference type="KEGG" id="pap:PSPA7_5771"/>
<dbReference type="HOGENOM" id="CLU_040933_0_0_6"/>
<dbReference type="UniPathway" id="UPA00251">
    <property type="reaction ID" value="UER00321"/>
</dbReference>
<dbReference type="Proteomes" id="UP000001582">
    <property type="component" value="Chromosome"/>
</dbReference>
<dbReference type="GO" id="GO:0005829">
    <property type="term" value="C:cytosol"/>
    <property type="evidence" value="ECO:0007669"/>
    <property type="project" value="TreeGrafter"/>
</dbReference>
<dbReference type="GO" id="GO:0004853">
    <property type="term" value="F:uroporphyrinogen decarboxylase activity"/>
    <property type="evidence" value="ECO:0007669"/>
    <property type="project" value="UniProtKB-UniRule"/>
</dbReference>
<dbReference type="GO" id="GO:0019353">
    <property type="term" value="P:protoporphyrinogen IX biosynthetic process from glutamate"/>
    <property type="evidence" value="ECO:0007669"/>
    <property type="project" value="TreeGrafter"/>
</dbReference>
<dbReference type="CDD" id="cd00717">
    <property type="entry name" value="URO-D"/>
    <property type="match status" value="1"/>
</dbReference>
<dbReference type="FunFam" id="3.20.20.210:FF:000001">
    <property type="entry name" value="Uroporphyrinogen decarboxylase"/>
    <property type="match status" value="1"/>
</dbReference>
<dbReference type="Gene3D" id="3.20.20.210">
    <property type="match status" value="1"/>
</dbReference>
<dbReference type="HAMAP" id="MF_00218">
    <property type="entry name" value="URO_D"/>
    <property type="match status" value="1"/>
</dbReference>
<dbReference type="InterPro" id="IPR038071">
    <property type="entry name" value="UROD/MetE-like_sf"/>
</dbReference>
<dbReference type="InterPro" id="IPR006361">
    <property type="entry name" value="Uroporphyrinogen_deCO2ase_HemE"/>
</dbReference>
<dbReference type="InterPro" id="IPR000257">
    <property type="entry name" value="Uroporphyrinogen_deCOase"/>
</dbReference>
<dbReference type="NCBIfam" id="TIGR01464">
    <property type="entry name" value="hemE"/>
    <property type="match status" value="1"/>
</dbReference>
<dbReference type="PANTHER" id="PTHR21091">
    <property type="entry name" value="METHYLTETRAHYDROFOLATE:HOMOCYSTEINE METHYLTRANSFERASE RELATED"/>
    <property type="match status" value="1"/>
</dbReference>
<dbReference type="PANTHER" id="PTHR21091:SF169">
    <property type="entry name" value="UROPORPHYRINOGEN DECARBOXYLASE"/>
    <property type="match status" value="1"/>
</dbReference>
<dbReference type="Pfam" id="PF01208">
    <property type="entry name" value="URO-D"/>
    <property type="match status" value="1"/>
</dbReference>
<dbReference type="SUPFAM" id="SSF51726">
    <property type="entry name" value="UROD/MetE-like"/>
    <property type="match status" value="1"/>
</dbReference>
<dbReference type="PROSITE" id="PS00906">
    <property type="entry name" value="UROD_1"/>
    <property type="match status" value="1"/>
</dbReference>
<dbReference type="PROSITE" id="PS00907">
    <property type="entry name" value="UROD_2"/>
    <property type="match status" value="1"/>
</dbReference>
<reference key="1">
    <citation type="submission" date="2007-06" db="EMBL/GenBank/DDBJ databases">
        <authorList>
            <person name="Dodson R.J."/>
            <person name="Harkins D."/>
            <person name="Paulsen I.T."/>
        </authorList>
    </citation>
    <scope>NUCLEOTIDE SEQUENCE [LARGE SCALE GENOMIC DNA]</scope>
    <source>
        <strain>DSM 24068 / PA7</strain>
    </source>
</reference>
<sequence length="355" mass="38868">MTALKNDRFLRALLKQPVDVTPVWMMRQAGRYLPEYRATRARAGDFMSLCMNPELACEVTLQPLDRYPQLDAAILFSDILTIPDAMGQGLYFETGEGPRFRKVVSSLADIEALPVPDPEKDLGYVMDAVRTIRRELNGRVPLIGFSGSPWTLATYMVEGGSSKDFRKSKAMLYDNPRAMHALLDKLAQSVTSYLNGQIRAGAQAVQIFDSWGGSLSAAAYQEFSLAYMRQIVDGLIREHDGRRVPVILFTKGGGLWLESMAEVGAEALGLDWTCDIGSARARVGERVALQGNMDPSVLYANPAAIRAEVARILAAYGKGTGHVFNLGHGITPEVDPAHAGAFFEAVHELSAQYHG</sequence>
<accession>A6VDF5</accession>
<feature type="chain" id="PRO_1000023945" description="Uroporphyrinogen decarboxylase">
    <location>
        <begin position="1"/>
        <end position="355"/>
    </location>
</feature>
<feature type="binding site" evidence="1">
    <location>
        <begin position="27"/>
        <end position="31"/>
    </location>
    <ligand>
        <name>substrate</name>
    </ligand>
</feature>
<feature type="binding site" evidence="1">
    <location>
        <position position="78"/>
    </location>
    <ligand>
        <name>substrate</name>
    </ligand>
</feature>
<feature type="binding site" evidence="1">
    <location>
        <position position="155"/>
    </location>
    <ligand>
        <name>substrate</name>
    </ligand>
</feature>
<feature type="binding site" evidence="1">
    <location>
        <position position="210"/>
    </location>
    <ligand>
        <name>substrate</name>
    </ligand>
</feature>
<feature type="binding site" evidence="1">
    <location>
        <position position="328"/>
    </location>
    <ligand>
        <name>substrate</name>
    </ligand>
</feature>
<feature type="site" description="Transition state stabilizer" evidence="1">
    <location>
        <position position="78"/>
    </location>
</feature>
<proteinExistence type="inferred from homology"/>
<organism>
    <name type="scientific">Pseudomonas paraeruginosa (strain DSM 24068 / PA7)</name>
    <name type="common">Pseudomonas aeruginosa (strain PA7)</name>
    <dbReference type="NCBI Taxonomy" id="381754"/>
    <lineage>
        <taxon>Bacteria</taxon>
        <taxon>Pseudomonadati</taxon>
        <taxon>Pseudomonadota</taxon>
        <taxon>Gammaproteobacteria</taxon>
        <taxon>Pseudomonadales</taxon>
        <taxon>Pseudomonadaceae</taxon>
        <taxon>Pseudomonas</taxon>
        <taxon>Pseudomonas paraeruginosa</taxon>
    </lineage>
</organism>